<protein>
    <recommendedName>
        <fullName>Glutathione S-transferase 1</fullName>
        <ecNumber>2.5.1.18</ecNumber>
    </recommendedName>
    <alternativeName>
        <fullName>GST class-theta</fullName>
    </alternativeName>
</protein>
<comment type="function">
    <text>Conjugation of reduced glutathione to a wide number of exogenous and endogenous hydrophobic electrophiles.</text>
</comment>
<comment type="catalytic activity">
    <reaction>
        <text>RX + glutathione = an S-substituted glutathione + a halide anion + H(+)</text>
        <dbReference type="Rhea" id="RHEA:16437"/>
        <dbReference type="ChEBI" id="CHEBI:15378"/>
        <dbReference type="ChEBI" id="CHEBI:16042"/>
        <dbReference type="ChEBI" id="CHEBI:17792"/>
        <dbReference type="ChEBI" id="CHEBI:57925"/>
        <dbReference type="ChEBI" id="CHEBI:90779"/>
        <dbReference type="EC" id="2.5.1.18"/>
    </reaction>
</comment>
<comment type="subunit">
    <text evidence="2">Homodimer.</text>
</comment>
<comment type="similarity">
    <text evidence="2">Belongs to the GST superfamily. Theta family.</text>
</comment>
<evidence type="ECO:0000250" key="1"/>
<evidence type="ECO:0000305" key="2"/>
<dbReference type="EC" id="2.5.1.18"/>
<dbReference type="EMBL" id="L32091">
    <property type="protein sequence ID" value="AAA92880.1"/>
    <property type="molecule type" value="mRNA"/>
</dbReference>
<dbReference type="SMR" id="P46430"/>
<dbReference type="OrthoDB" id="2309723at2759"/>
<dbReference type="GO" id="GO:0004364">
    <property type="term" value="F:glutathione transferase activity"/>
    <property type="evidence" value="ECO:0007669"/>
    <property type="project" value="UniProtKB-EC"/>
</dbReference>
<dbReference type="GO" id="GO:0006749">
    <property type="term" value="P:glutathione metabolic process"/>
    <property type="evidence" value="ECO:0007669"/>
    <property type="project" value="TreeGrafter"/>
</dbReference>
<dbReference type="CDD" id="cd03177">
    <property type="entry name" value="GST_C_Delta_Epsilon"/>
    <property type="match status" value="1"/>
</dbReference>
<dbReference type="CDD" id="cd03045">
    <property type="entry name" value="GST_N_Delta_Epsilon"/>
    <property type="match status" value="1"/>
</dbReference>
<dbReference type="FunFam" id="3.40.30.10:FF:000034">
    <property type="entry name" value="glutathione S-transferase 1"/>
    <property type="match status" value="1"/>
</dbReference>
<dbReference type="FunFam" id="1.20.1050.10:FF:000007">
    <property type="entry name" value="Glutathione S-transferase 1-1"/>
    <property type="match status" value="1"/>
</dbReference>
<dbReference type="Gene3D" id="1.20.1050.10">
    <property type="match status" value="1"/>
</dbReference>
<dbReference type="Gene3D" id="3.40.30.10">
    <property type="entry name" value="Glutaredoxin"/>
    <property type="match status" value="1"/>
</dbReference>
<dbReference type="InterPro" id="IPR010987">
    <property type="entry name" value="Glutathione-S-Trfase_C-like"/>
</dbReference>
<dbReference type="InterPro" id="IPR036282">
    <property type="entry name" value="Glutathione-S-Trfase_C_sf"/>
</dbReference>
<dbReference type="InterPro" id="IPR040079">
    <property type="entry name" value="Glutathione_S-Trfase"/>
</dbReference>
<dbReference type="InterPro" id="IPR004045">
    <property type="entry name" value="Glutathione_S-Trfase_N"/>
</dbReference>
<dbReference type="InterPro" id="IPR004046">
    <property type="entry name" value="GST_C"/>
</dbReference>
<dbReference type="InterPro" id="IPR036249">
    <property type="entry name" value="Thioredoxin-like_sf"/>
</dbReference>
<dbReference type="PANTHER" id="PTHR43969">
    <property type="entry name" value="GLUTATHIONE S TRANSFERASE D10, ISOFORM A-RELATED"/>
    <property type="match status" value="1"/>
</dbReference>
<dbReference type="PANTHER" id="PTHR43969:SF9">
    <property type="entry name" value="GLUTATHIONE S TRANSFERASE D10, ISOFORM A-RELATED"/>
    <property type="match status" value="1"/>
</dbReference>
<dbReference type="Pfam" id="PF00043">
    <property type="entry name" value="GST_C"/>
    <property type="match status" value="1"/>
</dbReference>
<dbReference type="Pfam" id="PF13417">
    <property type="entry name" value="GST_N_3"/>
    <property type="match status" value="1"/>
</dbReference>
<dbReference type="SFLD" id="SFLDS00019">
    <property type="entry name" value="Glutathione_Transferase_(cytos"/>
    <property type="match status" value="1"/>
</dbReference>
<dbReference type="SFLD" id="SFLDG01153">
    <property type="entry name" value="Main.4:_Theta-like"/>
    <property type="match status" value="1"/>
</dbReference>
<dbReference type="SUPFAM" id="SSF47616">
    <property type="entry name" value="GST C-terminal domain-like"/>
    <property type="match status" value="1"/>
</dbReference>
<dbReference type="SUPFAM" id="SSF52833">
    <property type="entry name" value="Thioredoxin-like"/>
    <property type="match status" value="1"/>
</dbReference>
<dbReference type="PROSITE" id="PS50405">
    <property type="entry name" value="GST_CTER"/>
    <property type="match status" value="1"/>
</dbReference>
<dbReference type="PROSITE" id="PS50404">
    <property type="entry name" value="GST_NTER"/>
    <property type="match status" value="1"/>
</dbReference>
<gene>
    <name type="primary">GST1</name>
</gene>
<sequence>MVMTLYKLDASPPARAVMMVIEALKIPDVEYIDVNLLEGSHLSEEFTKMNPQHTVPLLKDDDFLVWDSHAIAGYLVSKYGADDSLYPTDPKKRAIVDQRLHFDSGILFPALRGSLEPVIFWGETAFRPECLEKVRKGYDFAEKFLTSTWMAGEEFTVADICCVASISTMNDIIVPIDENTYPKLSAWLERCSQLDVYKKKNAPGNDLCKDLVASKLS</sequence>
<name>GSTT1_MANSE</name>
<proteinExistence type="evidence at transcript level"/>
<feature type="chain" id="PRO_0000185964" description="Glutathione S-transferase 1">
    <location>
        <begin position="1"/>
        <end position="217"/>
    </location>
</feature>
<feature type="domain" description="GST N-terminal">
    <location>
        <begin position="1"/>
        <end position="83"/>
    </location>
</feature>
<feature type="domain" description="GST C-terminal">
    <location>
        <begin position="89"/>
        <end position="211"/>
    </location>
</feature>
<feature type="binding site" evidence="1">
    <location>
        <position position="11"/>
    </location>
    <ligand>
        <name>glutathione</name>
        <dbReference type="ChEBI" id="CHEBI:57925"/>
    </ligand>
</feature>
<feature type="binding site" evidence="1">
    <location>
        <begin position="53"/>
        <end position="55"/>
    </location>
    <ligand>
        <name>glutathione</name>
        <dbReference type="ChEBI" id="CHEBI:57925"/>
    </ligand>
</feature>
<feature type="binding site" evidence="1">
    <location>
        <begin position="67"/>
        <end position="69"/>
    </location>
    <ligand>
        <name>glutathione</name>
        <dbReference type="ChEBI" id="CHEBI:57925"/>
    </ligand>
</feature>
<reference key="1">
    <citation type="journal article" date="1995" name="Insect Biochem. Mol. Biol.">
        <title>Glutathione S-transferases from larval Manduca sexta midgut: sequence of two cDNAs and enzyme induction.</title>
        <authorList>
            <person name="Snyder M.J."/>
            <person name="Walding J.K."/>
            <person name="Feyereisen R."/>
        </authorList>
    </citation>
    <scope>NUCLEOTIDE SEQUENCE [MRNA]</scope>
    <source>
        <tissue>Midgut</tissue>
    </source>
</reference>
<accession>P46430</accession>
<organism>
    <name type="scientific">Manduca sexta</name>
    <name type="common">Tobacco hawkmoth</name>
    <name type="synonym">Tobacco hornworm</name>
    <dbReference type="NCBI Taxonomy" id="7130"/>
    <lineage>
        <taxon>Eukaryota</taxon>
        <taxon>Metazoa</taxon>
        <taxon>Ecdysozoa</taxon>
        <taxon>Arthropoda</taxon>
        <taxon>Hexapoda</taxon>
        <taxon>Insecta</taxon>
        <taxon>Pterygota</taxon>
        <taxon>Neoptera</taxon>
        <taxon>Endopterygota</taxon>
        <taxon>Lepidoptera</taxon>
        <taxon>Glossata</taxon>
        <taxon>Ditrysia</taxon>
        <taxon>Bombycoidea</taxon>
        <taxon>Sphingidae</taxon>
        <taxon>Sphinginae</taxon>
        <taxon>Sphingini</taxon>
        <taxon>Manduca</taxon>
    </lineage>
</organism>
<keyword id="KW-0808">Transferase</keyword>